<name>RS7_THEVB</name>
<reference key="1">
    <citation type="journal article" date="2002" name="DNA Res.">
        <title>Complete genome structure of the thermophilic cyanobacterium Thermosynechococcus elongatus BP-1.</title>
        <authorList>
            <person name="Nakamura Y."/>
            <person name="Kaneko T."/>
            <person name="Sato S."/>
            <person name="Ikeuchi M."/>
            <person name="Katoh H."/>
            <person name="Sasamoto S."/>
            <person name="Watanabe A."/>
            <person name="Iriguchi M."/>
            <person name="Kawashima K."/>
            <person name="Kimura T."/>
            <person name="Kishida Y."/>
            <person name="Kiyokawa C."/>
            <person name="Kohara M."/>
            <person name="Matsumoto M."/>
            <person name="Matsuno A."/>
            <person name="Nakazaki N."/>
            <person name="Shimpo S."/>
            <person name="Sugimoto M."/>
            <person name="Takeuchi C."/>
            <person name="Yamada M."/>
            <person name="Tabata S."/>
        </authorList>
    </citation>
    <scope>NUCLEOTIDE SEQUENCE [LARGE SCALE GENOMIC DNA]</scope>
    <source>
        <strain>NIES-2133 / IAM M-273 / BP-1</strain>
    </source>
</reference>
<comment type="function">
    <text evidence="1">One of the primary rRNA binding proteins, it binds directly to 16S rRNA where it nucleates assembly of the head domain of the 30S subunit. Is located at the subunit interface close to the decoding center, probably blocks exit of the E-site tRNA.</text>
</comment>
<comment type="subunit">
    <text evidence="1">Part of the 30S ribosomal subunit. Contacts proteins S9 and S11.</text>
</comment>
<comment type="similarity">
    <text evidence="1">Belongs to the universal ribosomal protein uS7 family.</text>
</comment>
<dbReference type="EMBL" id="BA000039">
    <property type="protein sequence ID" value="BAC09300.1"/>
    <property type="molecule type" value="Genomic_DNA"/>
</dbReference>
<dbReference type="RefSeq" id="NP_682538.1">
    <property type="nucleotide sequence ID" value="NC_004113.1"/>
</dbReference>
<dbReference type="RefSeq" id="WP_011057585.1">
    <property type="nucleotide sequence ID" value="NC_004113.1"/>
</dbReference>
<dbReference type="SMR" id="Q8DI44"/>
<dbReference type="STRING" id="197221.gene:10748352"/>
<dbReference type="EnsemblBacteria" id="BAC09300">
    <property type="protein sequence ID" value="BAC09300"/>
    <property type="gene ID" value="BAC09300"/>
</dbReference>
<dbReference type="KEGG" id="tel:tlr1748"/>
<dbReference type="PATRIC" id="fig|197221.4.peg.1829"/>
<dbReference type="eggNOG" id="COG0049">
    <property type="taxonomic scope" value="Bacteria"/>
</dbReference>
<dbReference type="Proteomes" id="UP000000440">
    <property type="component" value="Chromosome"/>
</dbReference>
<dbReference type="GO" id="GO:0015935">
    <property type="term" value="C:small ribosomal subunit"/>
    <property type="evidence" value="ECO:0007669"/>
    <property type="project" value="InterPro"/>
</dbReference>
<dbReference type="GO" id="GO:0019843">
    <property type="term" value="F:rRNA binding"/>
    <property type="evidence" value="ECO:0007669"/>
    <property type="project" value="UniProtKB-UniRule"/>
</dbReference>
<dbReference type="GO" id="GO:0003735">
    <property type="term" value="F:structural constituent of ribosome"/>
    <property type="evidence" value="ECO:0007669"/>
    <property type="project" value="InterPro"/>
</dbReference>
<dbReference type="GO" id="GO:0000049">
    <property type="term" value="F:tRNA binding"/>
    <property type="evidence" value="ECO:0007669"/>
    <property type="project" value="UniProtKB-UniRule"/>
</dbReference>
<dbReference type="GO" id="GO:0006412">
    <property type="term" value="P:translation"/>
    <property type="evidence" value="ECO:0007669"/>
    <property type="project" value="UniProtKB-UniRule"/>
</dbReference>
<dbReference type="CDD" id="cd14871">
    <property type="entry name" value="uS7_Chloroplast"/>
    <property type="match status" value="1"/>
</dbReference>
<dbReference type="FunFam" id="1.10.455.10:FF:000001">
    <property type="entry name" value="30S ribosomal protein S7"/>
    <property type="match status" value="1"/>
</dbReference>
<dbReference type="Gene3D" id="1.10.455.10">
    <property type="entry name" value="Ribosomal protein S7 domain"/>
    <property type="match status" value="1"/>
</dbReference>
<dbReference type="HAMAP" id="MF_00480_B">
    <property type="entry name" value="Ribosomal_uS7_B"/>
    <property type="match status" value="1"/>
</dbReference>
<dbReference type="InterPro" id="IPR000235">
    <property type="entry name" value="Ribosomal_uS7"/>
</dbReference>
<dbReference type="InterPro" id="IPR005717">
    <property type="entry name" value="Ribosomal_uS7_bac/org-type"/>
</dbReference>
<dbReference type="InterPro" id="IPR020606">
    <property type="entry name" value="Ribosomal_uS7_CS"/>
</dbReference>
<dbReference type="InterPro" id="IPR023798">
    <property type="entry name" value="Ribosomal_uS7_dom"/>
</dbReference>
<dbReference type="InterPro" id="IPR036823">
    <property type="entry name" value="Ribosomal_uS7_dom_sf"/>
</dbReference>
<dbReference type="NCBIfam" id="TIGR01029">
    <property type="entry name" value="rpsG_bact"/>
    <property type="match status" value="1"/>
</dbReference>
<dbReference type="PANTHER" id="PTHR11205">
    <property type="entry name" value="RIBOSOMAL PROTEIN S7"/>
    <property type="match status" value="1"/>
</dbReference>
<dbReference type="Pfam" id="PF00177">
    <property type="entry name" value="Ribosomal_S7"/>
    <property type="match status" value="1"/>
</dbReference>
<dbReference type="PIRSF" id="PIRSF002122">
    <property type="entry name" value="RPS7p_RPS7a_RPS5e_RPS7o"/>
    <property type="match status" value="1"/>
</dbReference>
<dbReference type="SUPFAM" id="SSF47973">
    <property type="entry name" value="Ribosomal protein S7"/>
    <property type="match status" value="1"/>
</dbReference>
<dbReference type="PROSITE" id="PS00052">
    <property type="entry name" value="RIBOSOMAL_S7"/>
    <property type="match status" value="1"/>
</dbReference>
<protein>
    <recommendedName>
        <fullName evidence="1">Small ribosomal subunit protein uS7</fullName>
    </recommendedName>
    <alternativeName>
        <fullName evidence="2">30S ribosomal protein S7</fullName>
    </alternativeName>
</protein>
<feature type="chain" id="PRO_0000124363" description="Small ribosomal subunit protein uS7">
    <location>
        <begin position="1"/>
        <end position="156"/>
    </location>
</feature>
<organism>
    <name type="scientific">Thermosynechococcus vestitus (strain NIES-2133 / IAM M-273 / BP-1)</name>
    <dbReference type="NCBI Taxonomy" id="197221"/>
    <lineage>
        <taxon>Bacteria</taxon>
        <taxon>Bacillati</taxon>
        <taxon>Cyanobacteriota</taxon>
        <taxon>Cyanophyceae</taxon>
        <taxon>Acaryochloridales</taxon>
        <taxon>Thermosynechococcaceae</taxon>
        <taxon>Thermosynechococcus</taxon>
    </lineage>
</organism>
<accession>Q8DI44</accession>
<gene>
    <name evidence="1" type="primary">rpsG</name>
    <name evidence="1" type="synonym">rps7</name>
    <name type="ordered locus">tlr1748</name>
</gene>
<sequence>MSRRTRAQKRPTAPDPVYNNVLVNMLIQRVMRNGKKSLASRIVYEAMKTVQERTGEDALQIFERAVKNATPLVEVKARRVGGATYQVPMEVRPDRGISLALRWLVQFSRKRAGRSMSAKLANELMDAANETGSTIRKREETHKMAEANKAFAHYRY</sequence>
<keyword id="KW-1185">Reference proteome</keyword>
<keyword id="KW-0687">Ribonucleoprotein</keyword>
<keyword id="KW-0689">Ribosomal protein</keyword>
<keyword id="KW-0694">RNA-binding</keyword>
<keyword id="KW-0699">rRNA-binding</keyword>
<keyword id="KW-0820">tRNA-binding</keyword>
<proteinExistence type="inferred from homology"/>
<evidence type="ECO:0000255" key="1">
    <source>
        <dbReference type="HAMAP-Rule" id="MF_00480"/>
    </source>
</evidence>
<evidence type="ECO:0000305" key="2"/>